<dbReference type="EC" id="2.2.1.2" evidence="1"/>
<dbReference type="EMBL" id="CP000930">
    <property type="protein sequence ID" value="ABZ83497.1"/>
    <property type="molecule type" value="Genomic_DNA"/>
</dbReference>
<dbReference type="RefSeq" id="WP_012282026.1">
    <property type="nucleotide sequence ID" value="NC_010337.2"/>
</dbReference>
<dbReference type="SMR" id="B0TI77"/>
<dbReference type="STRING" id="498761.HM1_1077"/>
<dbReference type="KEGG" id="hmo:HM1_1077"/>
<dbReference type="eggNOG" id="COG0176">
    <property type="taxonomic scope" value="Bacteria"/>
</dbReference>
<dbReference type="HOGENOM" id="CLU_079764_0_0_9"/>
<dbReference type="OrthoDB" id="9807051at2"/>
<dbReference type="UniPathway" id="UPA00115">
    <property type="reaction ID" value="UER00414"/>
</dbReference>
<dbReference type="Proteomes" id="UP000008550">
    <property type="component" value="Chromosome"/>
</dbReference>
<dbReference type="GO" id="GO:0005737">
    <property type="term" value="C:cytoplasm"/>
    <property type="evidence" value="ECO:0007669"/>
    <property type="project" value="UniProtKB-SubCell"/>
</dbReference>
<dbReference type="GO" id="GO:0016832">
    <property type="term" value="F:aldehyde-lyase activity"/>
    <property type="evidence" value="ECO:0007669"/>
    <property type="project" value="InterPro"/>
</dbReference>
<dbReference type="GO" id="GO:0004801">
    <property type="term" value="F:transaldolase activity"/>
    <property type="evidence" value="ECO:0007669"/>
    <property type="project" value="UniProtKB-UniRule"/>
</dbReference>
<dbReference type="GO" id="GO:0005975">
    <property type="term" value="P:carbohydrate metabolic process"/>
    <property type="evidence" value="ECO:0007669"/>
    <property type="project" value="InterPro"/>
</dbReference>
<dbReference type="GO" id="GO:0006098">
    <property type="term" value="P:pentose-phosphate shunt"/>
    <property type="evidence" value="ECO:0007669"/>
    <property type="project" value="UniProtKB-UniRule"/>
</dbReference>
<dbReference type="CDD" id="cd00956">
    <property type="entry name" value="Transaldolase_FSA"/>
    <property type="match status" value="1"/>
</dbReference>
<dbReference type="FunFam" id="3.20.20.70:FF:000018">
    <property type="entry name" value="Probable transaldolase"/>
    <property type="match status" value="1"/>
</dbReference>
<dbReference type="Gene3D" id="3.20.20.70">
    <property type="entry name" value="Aldolase class I"/>
    <property type="match status" value="1"/>
</dbReference>
<dbReference type="HAMAP" id="MF_00494">
    <property type="entry name" value="Transaldolase_3b"/>
    <property type="match status" value="1"/>
</dbReference>
<dbReference type="InterPro" id="IPR013785">
    <property type="entry name" value="Aldolase_TIM"/>
</dbReference>
<dbReference type="InterPro" id="IPR001585">
    <property type="entry name" value="TAL/FSA"/>
</dbReference>
<dbReference type="InterPro" id="IPR022999">
    <property type="entry name" value="Transaldolase_3B"/>
</dbReference>
<dbReference type="InterPro" id="IPR004731">
    <property type="entry name" value="Transaldolase_3B/F6P_aldolase"/>
</dbReference>
<dbReference type="InterPro" id="IPR018225">
    <property type="entry name" value="Transaldolase_AS"/>
</dbReference>
<dbReference type="InterPro" id="IPR033919">
    <property type="entry name" value="TSA/FSA_arc/bac"/>
</dbReference>
<dbReference type="NCBIfam" id="TIGR00875">
    <property type="entry name" value="fsa_talC_mipB"/>
    <property type="match status" value="1"/>
</dbReference>
<dbReference type="PANTHER" id="PTHR10683">
    <property type="entry name" value="TRANSALDOLASE"/>
    <property type="match status" value="1"/>
</dbReference>
<dbReference type="PANTHER" id="PTHR10683:SF36">
    <property type="entry name" value="TRANSALDOLASE"/>
    <property type="match status" value="1"/>
</dbReference>
<dbReference type="Pfam" id="PF00923">
    <property type="entry name" value="TAL_FSA"/>
    <property type="match status" value="1"/>
</dbReference>
<dbReference type="SUPFAM" id="SSF51569">
    <property type="entry name" value="Aldolase"/>
    <property type="match status" value="1"/>
</dbReference>
<dbReference type="PROSITE" id="PS01054">
    <property type="entry name" value="TRANSALDOLASE_1"/>
    <property type="match status" value="1"/>
</dbReference>
<proteinExistence type="inferred from homology"/>
<comment type="function">
    <text evidence="1">Transaldolase is important for the balance of metabolites in the pentose-phosphate pathway.</text>
</comment>
<comment type="catalytic activity">
    <reaction evidence="1">
        <text>D-sedoheptulose 7-phosphate + D-glyceraldehyde 3-phosphate = D-erythrose 4-phosphate + beta-D-fructose 6-phosphate</text>
        <dbReference type="Rhea" id="RHEA:17053"/>
        <dbReference type="ChEBI" id="CHEBI:16897"/>
        <dbReference type="ChEBI" id="CHEBI:57483"/>
        <dbReference type="ChEBI" id="CHEBI:57634"/>
        <dbReference type="ChEBI" id="CHEBI:59776"/>
        <dbReference type="EC" id="2.2.1.2"/>
    </reaction>
</comment>
<comment type="pathway">
    <text evidence="1">Carbohydrate degradation; pentose phosphate pathway; D-glyceraldehyde 3-phosphate and beta-D-fructose 6-phosphate from D-ribose 5-phosphate and D-xylulose 5-phosphate (non-oxidative stage): step 2/3.</text>
</comment>
<comment type="subcellular location">
    <subcellularLocation>
        <location evidence="1">Cytoplasm</location>
    </subcellularLocation>
</comment>
<comment type="similarity">
    <text evidence="1">Belongs to the transaldolase family. Type 3B subfamily.</text>
</comment>
<reference key="1">
    <citation type="journal article" date="2008" name="J. Bacteriol.">
        <title>The genome of Heliobacterium modesticaldum, a phototrophic representative of the Firmicutes containing the simplest photosynthetic apparatus.</title>
        <authorList>
            <person name="Sattley W.M."/>
            <person name="Madigan M.T."/>
            <person name="Swingley W.D."/>
            <person name="Cheung P.C."/>
            <person name="Clocksin K.M."/>
            <person name="Conrad A.L."/>
            <person name="Dejesa L.C."/>
            <person name="Honchak B.M."/>
            <person name="Jung D.O."/>
            <person name="Karbach L.E."/>
            <person name="Kurdoglu A."/>
            <person name="Lahiri S."/>
            <person name="Mastrian S.D."/>
            <person name="Page L.E."/>
            <person name="Taylor H.L."/>
            <person name="Wang Z.T."/>
            <person name="Raymond J."/>
            <person name="Chen M."/>
            <person name="Blankenship R.E."/>
            <person name="Touchman J.W."/>
        </authorList>
    </citation>
    <scope>NUCLEOTIDE SEQUENCE [LARGE SCALE GENOMIC DNA]</scope>
    <source>
        <strain>ATCC 51547 / Ice1</strain>
    </source>
</reference>
<gene>
    <name evidence="1" type="primary">tal</name>
    <name type="ordered locus">Helmi_08720</name>
    <name type="ORF">HM1_1077</name>
</gene>
<evidence type="ECO:0000255" key="1">
    <source>
        <dbReference type="HAMAP-Rule" id="MF_00494"/>
    </source>
</evidence>
<keyword id="KW-0963">Cytoplasm</keyword>
<keyword id="KW-0570">Pentose shunt</keyword>
<keyword id="KW-1185">Reference proteome</keyword>
<keyword id="KW-0704">Schiff base</keyword>
<keyword id="KW-0808">Transferase</keyword>
<accession>B0TI77</accession>
<organism>
    <name type="scientific">Heliobacterium modesticaldum (strain ATCC 51547 / Ice1)</name>
    <dbReference type="NCBI Taxonomy" id="498761"/>
    <lineage>
        <taxon>Bacteria</taxon>
        <taxon>Bacillati</taxon>
        <taxon>Bacillota</taxon>
        <taxon>Clostridia</taxon>
        <taxon>Eubacteriales</taxon>
        <taxon>Heliobacteriaceae</taxon>
        <taxon>Heliomicrobium</taxon>
    </lineage>
</organism>
<feature type="chain" id="PRO_1000126319" description="Probable transaldolase">
    <location>
        <begin position="1"/>
        <end position="215"/>
    </location>
</feature>
<feature type="active site" description="Schiff-base intermediate with substrate" evidence="1">
    <location>
        <position position="83"/>
    </location>
</feature>
<name>TAL_HELMI</name>
<protein>
    <recommendedName>
        <fullName evidence="1">Probable transaldolase</fullName>
        <ecNumber evidence="1">2.2.1.2</ecNumber>
    </recommendedName>
</protein>
<sequence>MRFFLDSANIDEIREANRLGVISGVTTNPSLIAKEGRNFREVVQEIAAIVDGPISAEVISTDAEGMIAEARELAKIHPNIVIKIPLCAAGLSATARLAQEGIRTNVTLIFSANQGLLAANAGATYVSPFVGRLDDIGHDGMDVLRELVEIFDIHGIATEIIAASIRHPVHVSAAARAGAPIATVPFKVLMQLVKHPLTDLGIERFLKDWESVKDK</sequence>